<proteinExistence type="inferred from homology"/>
<protein>
    <recommendedName>
        <fullName evidence="1">ATP synthase subunit c, chloroplastic</fullName>
    </recommendedName>
    <alternativeName>
        <fullName evidence="1">ATP synthase F(0) sector subunit c</fullName>
    </alternativeName>
    <alternativeName>
        <fullName evidence="1">ATPase subunit III</fullName>
    </alternativeName>
    <alternativeName>
        <fullName evidence="1">F-type ATPase subunit c</fullName>
        <shortName evidence="1">F-ATPase subunit c</shortName>
    </alternativeName>
    <alternativeName>
        <fullName evidence="1">Lipid-binding protein</fullName>
    </alternativeName>
</protein>
<geneLocation type="chloroplast"/>
<sequence length="81" mass="7990">MNPLISAASVIAAGLAVGLASIGPGVGQGTAAGQAVEGIARQPEAEGKIRGTLLLSLAFMEALTIYGLVVALALLFANPFV</sequence>
<feature type="chain" id="PRO_0000362898" description="ATP synthase subunit c, chloroplastic">
    <location>
        <begin position="1"/>
        <end position="81"/>
    </location>
</feature>
<feature type="transmembrane region" description="Helical" evidence="1">
    <location>
        <begin position="3"/>
        <end position="23"/>
    </location>
</feature>
<feature type="transmembrane region" description="Helical" evidence="1">
    <location>
        <begin position="57"/>
        <end position="77"/>
    </location>
</feature>
<feature type="site" description="Reversibly protonated during proton transport" evidence="1">
    <location>
        <position position="61"/>
    </location>
</feature>
<comment type="function">
    <text evidence="1">F(1)F(0) ATP synthase produces ATP from ADP in the presence of a proton or sodium gradient. F-type ATPases consist of two structural domains, F(1) containing the extramembraneous catalytic core and F(0) containing the membrane proton channel, linked together by a central stalk and a peripheral stalk. During catalysis, ATP synthesis in the catalytic domain of F(1) is coupled via a rotary mechanism of the central stalk subunits to proton translocation.</text>
</comment>
<comment type="function">
    <text evidence="1">Key component of the F(0) channel; it plays a direct role in translocation across the membrane. A homomeric c-ring of between 10-14 subunits forms the central stalk rotor element with the F(1) delta and epsilon subunits.</text>
</comment>
<comment type="subunit">
    <text evidence="1">F-type ATPases have 2 components, F(1) - the catalytic core - and F(0) - the membrane proton channel. F(1) has five subunits: alpha(3), beta(3), gamma(1), delta(1), epsilon(1). F(0) has four main subunits: a(1), b(1), b'(1) and c(10-14). The alpha and beta chains form an alternating ring which encloses part of the gamma chain. F(1) is attached to F(0) by a central stalk formed by the gamma and epsilon chains, while a peripheral stalk is formed by the delta, b and b' chains.</text>
</comment>
<comment type="subcellular location">
    <subcellularLocation>
        <location evidence="1">Plastid</location>
        <location evidence="1">Chloroplast thylakoid membrane</location>
        <topology evidence="1">Multi-pass membrane protein</topology>
    </subcellularLocation>
</comment>
<comment type="miscellaneous">
    <text>In plastids the F-type ATPase is also known as CF(1)CF(0).</text>
</comment>
<comment type="similarity">
    <text evidence="1">Belongs to the ATPase C chain family.</text>
</comment>
<gene>
    <name evidence="1" type="primary">atpH</name>
</gene>
<dbReference type="EMBL" id="EF380352">
    <property type="protein sequence ID" value="ABQ43247.1"/>
    <property type="molecule type" value="Genomic_DNA"/>
</dbReference>
<dbReference type="RefSeq" id="YP_001294085.1">
    <property type="nucleotide sequence ID" value="NC_009598.1"/>
</dbReference>
<dbReference type="SMR" id="A6MMA9"/>
<dbReference type="GeneID" id="5236531"/>
<dbReference type="GO" id="GO:0009535">
    <property type="term" value="C:chloroplast thylakoid membrane"/>
    <property type="evidence" value="ECO:0007669"/>
    <property type="project" value="UniProtKB-SubCell"/>
</dbReference>
<dbReference type="GO" id="GO:0045259">
    <property type="term" value="C:proton-transporting ATP synthase complex"/>
    <property type="evidence" value="ECO:0007669"/>
    <property type="project" value="UniProtKB-KW"/>
</dbReference>
<dbReference type="GO" id="GO:0033177">
    <property type="term" value="C:proton-transporting two-sector ATPase complex, proton-transporting domain"/>
    <property type="evidence" value="ECO:0007669"/>
    <property type="project" value="InterPro"/>
</dbReference>
<dbReference type="GO" id="GO:0008289">
    <property type="term" value="F:lipid binding"/>
    <property type="evidence" value="ECO:0007669"/>
    <property type="project" value="UniProtKB-KW"/>
</dbReference>
<dbReference type="GO" id="GO:0046933">
    <property type="term" value="F:proton-transporting ATP synthase activity, rotational mechanism"/>
    <property type="evidence" value="ECO:0007669"/>
    <property type="project" value="UniProtKB-UniRule"/>
</dbReference>
<dbReference type="CDD" id="cd18183">
    <property type="entry name" value="ATP-synt_Fo_c_ATPH"/>
    <property type="match status" value="1"/>
</dbReference>
<dbReference type="FunFam" id="1.20.20.10:FF:000001">
    <property type="entry name" value="ATP synthase subunit c, chloroplastic"/>
    <property type="match status" value="1"/>
</dbReference>
<dbReference type="Gene3D" id="1.20.20.10">
    <property type="entry name" value="F1F0 ATP synthase subunit C"/>
    <property type="match status" value="1"/>
</dbReference>
<dbReference type="HAMAP" id="MF_01396">
    <property type="entry name" value="ATP_synth_c_bact"/>
    <property type="match status" value="1"/>
</dbReference>
<dbReference type="InterPro" id="IPR005953">
    <property type="entry name" value="ATP_synth_csu_bac/chlpt"/>
</dbReference>
<dbReference type="InterPro" id="IPR000454">
    <property type="entry name" value="ATP_synth_F0_csu"/>
</dbReference>
<dbReference type="InterPro" id="IPR020537">
    <property type="entry name" value="ATP_synth_F0_csu_DDCD_BS"/>
</dbReference>
<dbReference type="InterPro" id="IPR038662">
    <property type="entry name" value="ATP_synth_F0_csu_sf"/>
</dbReference>
<dbReference type="InterPro" id="IPR002379">
    <property type="entry name" value="ATPase_proteolipid_c-like_dom"/>
</dbReference>
<dbReference type="InterPro" id="IPR035921">
    <property type="entry name" value="F/V-ATP_Csub_sf"/>
</dbReference>
<dbReference type="NCBIfam" id="TIGR01260">
    <property type="entry name" value="ATP_synt_c"/>
    <property type="match status" value="1"/>
</dbReference>
<dbReference type="NCBIfam" id="NF005608">
    <property type="entry name" value="PRK07354.1"/>
    <property type="match status" value="1"/>
</dbReference>
<dbReference type="PANTHER" id="PTHR10031">
    <property type="entry name" value="ATP SYNTHASE LIPID-BINDING PROTEIN, MITOCHONDRIAL"/>
    <property type="match status" value="1"/>
</dbReference>
<dbReference type="PANTHER" id="PTHR10031:SF0">
    <property type="entry name" value="ATPASE PROTEIN 9"/>
    <property type="match status" value="1"/>
</dbReference>
<dbReference type="Pfam" id="PF00137">
    <property type="entry name" value="ATP-synt_C"/>
    <property type="match status" value="1"/>
</dbReference>
<dbReference type="PRINTS" id="PR00124">
    <property type="entry name" value="ATPASEC"/>
</dbReference>
<dbReference type="SUPFAM" id="SSF81333">
    <property type="entry name" value="F1F0 ATP synthase subunit C"/>
    <property type="match status" value="1"/>
</dbReference>
<dbReference type="PROSITE" id="PS00605">
    <property type="entry name" value="ATPASE_C"/>
    <property type="match status" value="1"/>
</dbReference>
<organism>
    <name type="scientific">Chloranthus spicatus</name>
    <name type="common">Chulantree</name>
    <name type="synonym">Nigrina spicata</name>
    <dbReference type="NCBI Taxonomy" id="13006"/>
    <lineage>
        <taxon>Eukaryota</taxon>
        <taxon>Viridiplantae</taxon>
        <taxon>Streptophyta</taxon>
        <taxon>Embryophyta</taxon>
        <taxon>Tracheophyta</taxon>
        <taxon>Spermatophyta</taxon>
        <taxon>Magnoliopsida</taxon>
        <taxon>Chloranthales</taxon>
        <taxon>Chloranthaceae</taxon>
        <taxon>Chloranthus</taxon>
    </lineage>
</organism>
<evidence type="ECO:0000255" key="1">
    <source>
        <dbReference type="HAMAP-Rule" id="MF_01396"/>
    </source>
</evidence>
<accession>A6MMA9</accession>
<keyword id="KW-0066">ATP synthesis</keyword>
<keyword id="KW-0138">CF(0)</keyword>
<keyword id="KW-0150">Chloroplast</keyword>
<keyword id="KW-0375">Hydrogen ion transport</keyword>
<keyword id="KW-0406">Ion transport</keyword>
<keyword id="KW-0446">Lipid-binding</keyword>
<keyword id="KW-0472">Membrane</keyword>
<keyword id="KW-0934">Plastid</keyword>
<keyword id="KW-0793">Thylakoid</keyword>
<keyword id="KW-0812">Transmembrane</keyword>
<keyword id="KW-1133">Transmembrane helix</keyword>
<keyword id="KW-0813">Transport</keyword>
<reference key="1">
    <citation type="journal article" date="2007" name="Mol. Phylogenet. Evol.">
        <title>Phylogenetic and evolutionary implications of complete chloroplast genome sequences of four early-diverging angiosperms: Buxus (Buxaceae), Chloranthus (Chloranthaceae), Dioscorea (Dioscoreaceae), and Illicium (Schisandraceae).</title>
        <authorList>
            <person name="Hansen D.R."/>
            <person name="Dastidar S.G."/>
            <person name="Cai Z."/>
            <person name="Penaflor C."/>
            <person name="Kuehl J.V."/>
            <person name="Boore J.L."/>
            <person name="Jansen R.K."/>
        </authorList>
    </citation>
    <scope>NUCLEOTIDE SEQUENCE [LARGE SCALE GENOMIC DNA]</scope>
</reference>
<name>ATPH_CHLSC</name>